<organism>
    <name type="scientific">Rhizobium johnstonii (strain DSM 114642 / LMG 32736 / 3841)</name>
    <name type="common">Rhizobium leguminosarum bv. viciae</name>
    <dbReference type="NCBI Taxonomy" id="216596"/>
    <lineage>
        <taxon>Bacteria</taxon>
        <taxon>Pseudomonadati</taxon>
        <taxon>Pseudomonadota</taxon>
        <taxon>Alphaproteobacteria</taxon>
        <taxon>Hyphomicrobiales</taxon>
        <taxon>Rhizobiaceae</taxon>
        <taxon>Rhizobium/Agrobacterium group</taxon>
        <taxon>Rhizobium</taxon>
        <taxon>Rhizobium johnstonii</taxon>
    </lineage>
</organism>
<keyword id="KW-0067">ATP-binding</keyword>
<keyword id="KW-0460">Magnesium</keyword>
<keyword id="KW-0464">Manganese</keyword>
<keyword id="KW-0479">Metal-binding</keyword>
<keyword id="KW-0547">Nucleotide-binding</keyword>
<keyword id="KW-0548">Nucleotidyltransferase</keyword>
<keyword id="KW-0808">Transferase</keyword>
<gene>
    <name evidence="1" type="primary">ydiU</name>
    <name evidence="1" type="synonym">selO</name>
    <name type="ordered locus">RL1355</name>
</gene>
<name>SELO_RHIJ3</name>
<dbReference type="EC" id="2.7.7.-" evidence="1"/>
<dbReference type="EC" id="2.7.7.108" evidence="1"/>
<dbReference type="EMBL" id="AM236080">
    <property type="protein sequence ID" value="CAK06852.1"/>
    <property type="molecule type" value="Genomic_DNA"/>
</dbReference>
<dbReference type="RefSeq" id="WP_011651066.1">
    <property type="nucleotide sequence ID" value="NC_008380.1"/>
</dbReference>
<dbReference type="SMR" id="Q1MJK8"/>
<dbReference type="EnsemblBacteria" id="CAK06852">
    <property type="protein sequence ID" value="CAK06852"/>
    <property type="gene ID" value="RL1355"/>
</dbReference>
<dbReference type="KEGG" id="rle:RL1355"/>
<dbReference type="eggNOG" id="COG0397">
    <property type="taxonomic scope" value="Bacteria"/>
</dbReference>
<dbReference type="HOGENOM" id="CLU_010245_4_1_5"/>
<dbReference type="Proteomes" id="UP000006575">
    <property type="component" value="Chromosome"/>
</dbReference>
<dbReference type="GO" id="GO:0070733">
    <property type="term" value="F:AMPylase activity"/>
    <property type="evidence" value="ECO:0007669"/>
    <property type="project" value="RHEA"/>
</dbReference>
<dbReference type="GO" id="GO:0005524">
    <property type="term" value="F:ATP binding"/>
    <property type="evidence" value="ECO:0007669"/>
    <property type="project" value="UniProtKB-UniRule"/>
</dbReference>
<dbReference type="GO" id="GO:0000287">
    <property type="term" value="F:magnesium ion binding"/>
    <property type="evidence" value="ECO:0007669"/>
    <property type="project" value="UniProtKB-UniRule"/>
</dbReference>
<dbReference type="HAMAP" id="MF_00692">
    <property type="entry name" value="YdiU_SelO"/>
    <property type="match status" value="1"/>
</dbReference>
<dbReference type="InterPro" id="IPR011009">
    <property type="entry name" value="Kinase-like_dom_sf"/>
</dbReference>
<dbReference type="InterPro" id="IPR003846">
    <property type="entry name" value="SelO"/>
</dbReference>
<dbReference type="NCBIfam" id="NF000658">
    <property type="entry name" value="PRK00029.1"/>
    <property type="match status" value="1"/>
</dbReference>
<dbReference type="PANTHER" id="PTHR32057">
    <property type="entry name" value="PROTEIN ADENYLYLTRANSFERASE SELO, MITOCHONDRIAL"/>
    <property type="match status" value="1"/>
</dbReference>
<dbReference type="PANTHER" id="PTHR32057:SF14">
    <property type="entry name" value="PROTEIN ADENYLYLTRANSFERASE SELO, MITOCHONDRIAL"/>
    <property type="match status" value="1"/>
</dbReference>
<dbReference type="Pfam" id="PF02696">
    <property type="entry name" value="SelO"/>
    <property type="match status" value="1"/>
</dbReference>
<dbReference type="SUPFAM" id="SSF56112">
    <property type="entry name" value="Protein kinase-like (PK-like)"/>
    <property type="match status" value="1"/>
</dbReference>
<comment type="function">
    <text evidence="1">Nucleotidyltransferase involved in the post-translational modification of proteins. It can catalyze the addition of adenosine monophosphate (AMP) or uridine monophosphate (UMP) to a protein, resulting in modifications known as AMPylation and UMPylation.</text>
</comment>
<comment type="catalytic activity">
    <reaction evidence="1">
        <text>L-seryl-[protein] + ATP = 3-O-(5'-adenylyl)-L-seryl-[protein] + diphosphate</text>
        <dbReference type="Rhea" id="RHEA:58120"/>
        <dbReference type="Rhea" id="RHEA-COMP:9863"/>
        <dbReference type="Rhea" id="RHEA-COMP:15073"/>
        <dbReference type="ChEBI" id="CHEBI:29999"/>
        <dbReference type="ChEBI" id="CHEBI:30616"/>
        <dbReference type="ChEBI" id="CHEBI:33019"/>
        <dbReference type="ChEBI" id="CHEBI:142516"/>
        <dbReference type="EC" id="2.7.7.108"/>
    </reaction>
</comment>
<comment type="catalytic activity">
    <reaction evidence="1">
        <text>L-threonyl-[protein] + ATP = 3-O-(5'-adenylyl)-L-threonyl-[protein] + diphosphate</text>
        <dbReference type="Rhea" id="RHEA:54292"/>
        <dbReference type="Rhea" id="RHEA-COMP:11060"/>
        <dbReference type="Rhea" id="RHEA-COMP:13847"/>
        <dbReference type="ChEBI" id="CHEBI:30013"/>
        <dbReference type="ChEBI" id="CHEBI:30616"/>
        <dbReference type="ChEBI" id="CHEBI:33019"/>
        <dbReference type="ChEBI" id="CHEBI:138113"/>
        <dbReference type="EC" id="2.7.7.108"/>
    </reaction>
</comment>
<comment type="catalytic activity">
    <reaction evidence="1">
        <text>L-tyrosyl-[protein] + ATP = O-(5'-adenylyl)-L-tyrosyl-[protein] + diphosphate</text>
        <dbReference type="Rhea" id="RHEA:54288"/>
        <dbReference type="Rhea" id="RHEA-COMP:10136"/>
        <dbReference type="Rhea" id="RHEA-COMP:13846"/>
        <dbReference type="ChEBI" id="CHEBI:30616"/>
        <dbReference type="ChEBI" id="CHEBI:33019"/>
        <dbReference type="ChEBI" id="CHEBI:46858"/>
        <dbReference type="ChEBI" id="CHEBI:83624"/>
        <dbReference type="EC" id="2.7.7.108"/>
    </reaction>
</comment>
<comment type="catalytic activity">
    <reaction evidence="1">
        <text>L-histidyl-[protein] + UTP = N(tele)-(5'-uridylyl)-L-histidyl-[protein] + diphosphate</text>
        <dbReference type="Rhea" id="RHEA:83891"/>
        <dbReference type="Rhea" id="RHEA-COMP:9745"/>
        <dbReference type="Rhea" id="RHEA-COMP:20239"/>
        <dbReference type="ChEBI" id="CHEBI:29979"/>
        <dbReference type="ChEBI" id="CHEBI:33019"/>
        <dbReference type="ChEBI" id="CHEBI:46398"/>
        <dbReference type="ChEBI" id="CHEBI:233474"/>
    </reaction>
</comment>
<comment type="catalytic activity">
    <reaction evidence="1">
        <text>L-seryl-[protein] + UTP = O-(5'-uridylyl)-L-seryl-[protein] + diphosphate</text>
        <dbReference type="Rhea" id="RHEA:64604"/>
        <dbReference type="Rhea" id="RHEA-COMP:9863"/>
        <dbReference type="Rhea" id="RHEA-COMP:16635"/>
        <dbReference type="ChEBI" id="CHEBI:29999"/>
        <dbReference type="ChEBI" id="CHEBI:33019"/>
        <dbReference type="ChEBI" id="CHEBI:46398"/>
        <dbReference type="ChEBI" id="CHEBI:156051"/>
    </reaction>
</comment>
<comment type="catalytic activity">
    <reaction evidence="1">
        <text>L-tyrosyl-[protein] + UTP = O-(5'-uridylyl)-L-tyrosyl-[protein] + diphosphate</text>
        <dbReference type="Rhea" id="RHEA:83887"/>
        <dbReference type="Rhea" id="RHEA-COMP:10136"/>
        <dbReference type="Rhea" id="RHEA-COMP:20238"/>
        <dbReference type="ChEBI" id="CHEBI:33019"/>
        <dbReference type="ChEBI" id="CHEBI:46398"/>
        <dbReference type="ChEBI" id="CHEBI:46858"/>
        <dbReference type="ChEBI" id="CHEBI:90602"/>
    </reaction>
</comment>
<comment type="cofactor">
    <cofactor evidence="1">
        <name>Mg(2+)</name>
        <dbReference type="ChEBI" id="CHEBI:18420"/>
    </cofactor>
    <cofactor evidence="1">
        <name>Mn(2+)</name>
        <dbReference type="ChEBI" id="CHEBI:29035"/>
    </cofactor>
</comment>
<comment type="similarity">
    <text evidence="1">Belongs to the SELO family.</text>
</comment>
<protein>
    <recommendedName>
        <fullName evidence="1">Protein nucleotidyltransferase YdiU</fullName>
        <ecNumber evidence="1">2.7.7.-</ecNumber>
    </recommendedName>
    <alternativeName>
        <fullName evidence="1">Protein adenylyltransferase YdiU</fullName>
        <ecNumber evidence="1">2.7.7.108</ecNumber>
    </alternativeName>
    <alternativeName>
        <fullName evidence="1">Protein uridylyltransferase YdiU</fullName>
        <ecNumber evidence="1">2.7.7.-</ecNumber>
    </alternativeName>
</protein>
<feature type="chain" id="PRO_0000271853" description="Protein nucleotidyltransferase YdiU">
    <location>
        <begin position="1"/>
        <end position="500"/>
    </location>
</feature>
<feature type="active site" description="Proton acceptor" evidence="1">
    <location>
        <position position="258"/>
    </location>
</feature>
<feature type="binding site" evidence="1">
    <location>
        <position position="96"/>
    </location>
    <ligand>
        <name>ATP</name>
        <dbReference type="ChEBI" id="CHEBI:30616"/>
    </ligand>
</feature>
<feature type="binding site" evidence="1">
    <location>
        <position position="98"/>
    </location>
    <ligand>
        <name>ATP</name>
        <dbReference type="ChEBI" id="CHEBI:30616"/>
    </ligand>
</feature>
<feature type="binding site" evidence="1">
    <location>
        <position position="99"/>
    </location>
    <ligand>
        <name>ATP</name>
        <dbReference type="ChEBI" id="CHEBI:30616"/>
    </ligand>
</feature>
<feature type="binding site" evidence="1">
    <location>
        <position position="119"/>
    </location>
    <ligand>
        <name>ATP</name>
        <dbReference type="ChEBI" id="CHEBI:30616"/>
    </ligand>
</feature>
<feature type="binding site" evidence="1">
    <location>
        <position position="131"/>
    </location>
    <ligand>
        <name>ATP</name>
        <dbReference type="ChEBI" id="CHEBI:30616"/>
    </ligand>
</feature>
<feature type="binding site" evidence="1">
    <location>
        <position position="132"/>
    </location>
    <ligand>
        <name>ATP</name>
        <dbReference type="ChEBI" id="CHEBI:30616"/>
    </ligand>
</feature>
<feature type="binding site" evidence="1">
    <location>
        <position position="182"/>
    </location>
    <ligand>
        <name>ATP</name>
        <dbReference type="ChEBI" id="CHEBI:30616"/>
    </ligand>
</feature>
<feature type="binding site" evidence="1">
    <location>
        <position position="189"/>
    </location>
    <ligand>
        <name>ATP</name>
        <dbReference type="ChEBI" id="CHEBI:30616"/>
    </ligand>
</feature>
<feature type="binding site" evidence="1">
    <location>
        <position position="259"/>
    </location>
    <ligand>
        <name>Mg(2+)</name>
        <dbReference type="ChEBI" id="CHEBI:18420"/>
    </ligand>
</feature>
<feature type="binding site" evidence="1">
    <location>
        <position position="268"/>
    </location>
    <ligand>
        <name>ATP</name>
        <dbReference type="ChEBI" id="CHEBI:30616"/>
    </ligand>
</feature>
<feature type="binding site" evidence="1">
    <location>
        <position position="268"/>
    </location>
    <ligand>
        <name>Mg(2+)</name>
        <dbReference type="ChEBI" id="CHEBI:18420"/>
    </ligand>
</feature>
<evidence type="ECO:0000255" key="1">
    <source>
        <dbReference type="HAMAP-Rule" id="MF_00692"/>
    </source>
</evidence>
<accession>Q1MJK8</accession>
<reference key="1">
    <citation type="journal article" date="2006" name="Genome Biol.">
        <title>The genome of Rhizobium leguminosarum has recognizable core and accessory components.</title>
        <authorList>
            <person name="Young J.P.W."/>
            <person name="Crossman L.C."/>
            <person name="Johnston A.W.B."/>
            <person name="Thomson N.R."/>
            <person name="Ghazoui Z.F."/>
            <person name="Hull K.H."/>
            <person name="Wexler M."/>
            <person name="Curson A.R.J."/>
            <person name="Todd J.D."/>
            <person name="Poole P.S."/>
            <person name="Mauchline T.H."/>
            <person name="East A.K."/>
            <person name="Quail M.A."/>
            <person name="Churcher C."/>
            <person name="Arrowsmith C."/>
            <person name="Cherevach I."/>
            <person name="Chillingworth T."/>
            <person name="Clarke K."/>
            <person name="Cronin A."/>
            <person name="Davis P."/>
            <person name="Fraser A."/>
            <person name="Hance Z."/>
            <person name="Hauser H."/>
            <person name="Jagels K."/>
            <person name="Moule S."/>
            <person name="Mungall K."/>
            <person name="Norbertczak H."/>
            <person name="Rabbinowitsch E."/>
            <person name="Sanders M."/>
            <person name="Simmonds M."/>
            <person name="Whitehead S."/>
            <person name="Parkhill J."/>
        </authorList>
    </citation>
    <scope>NUCLEOTIDE SEQUENCE [LARGE SCALE GENOMIC DNA]</scope>
    <source>
        <strain>DSM 114642 / LMG 32736 / 3841</strain>
    </source>
</reference>
<proteinExistence type="inferred from homology"/>
<sequence>MTSALQKNRPGAAFPFDNSYVGLPPHFFAAQAPTAVAEPWLIKLNEALAAELGLDVEALRRDGAAIFSGNLVPEGAEPLAMAYAGHQFGGFSPQLGDGRAILLGEVVDRSGKRYDIQLKGAGPTPFSRRGDGRAAIGPVLREYIISEAMFALGIPATRALAAVTTGEPVYREEVLPGAVFTRVAASHIRVGTFQYFAARGDTDGVRALADYVIDRHYPALKEAENPYLALFDAVCERQAALIARWLHVGFIHGVMNTDNMTVSGETIDFGPCAFMDAYDPATVFSSIDQHGRYAYANQPGIGQWNLARLGETLLPLIDAEPDSAVDKANAVIKSYGERFQAHWLAGMLEKIGLAGEEDGDLDLVQALLSLMQAQGADFTLTFRRLSDLAGDDAAEPEFAASFREPDACGAWLTQWRERLSRDPQTASERAIAMRSVNPAFIPRNHRVEQAIEAAVDNGDFSLFEALLSVLSKPYEDQPGFAAYREPPKPSERVLATFCGT</sequence>